<reference key="1">
    <citation type="journal article" date="2004" name="Genome Res.">
        <title>The complete genome and proteome of Mycoplasma mobile.</title>
        <authorList>
            <person name="Jaffe J.D."/>
            <person name="Stange-Thomann N."/>
            <person name="Smith C."/>
            <person name="DeCaprio D."/>
            <person name="Fisher S."/>
            <person name="Butler J."/>
            <person name="Calvo S."/>
            <person name="Elkins T."/>
            <person name="FitzGerald M.G."/>
            <person name="Hafez N."/>
            <person name="Kodira C.D."/>
            <person name="Major J."/>
            <person name="Wang S."/>
            <person name="Wilkinson J."/>
            <person name="Nicol R."/>
            <person name="Nusbaum C."/>
            <person name="Birren B."/>
            <person name="Berg H.C."/>
            <person name="Church G.M."/>
        </authorList>
    </citation>
    <scope>NUCLEOTIDE SEQUENCE [LARGE SCALE GENOMIC DNA]</scope>
    <source>
        <strain>ATCC 43663 / NCTC 11711 / 163 K</strain>
    </source>
</reference>
<sequence length="854" mass="98101">MKFLKNIKSLEFRLAESMLKSINDLKEKYLAFSDEELKNMTNVFKEKLKKNVSLESIRIDAFAVAREATFRVLKKRPYDVQMIGGLILDFGSVAEMKTGEGKTITSIAPVYLNALKGSGVIVSTVNEYLAERDAAEMGEVFKWLGLSVGLNKANMPSNLKRAAYKCDITYSVHSELGFDYLRDNMVNSFEEKVQRDLNFALIDEVDSILIDEAKTPLIISGGKSDEVSLYAVTDQFVRTLDHVDYAIDEETKAINLTAQGIEKTKKFFNFNSLYNLENSELIHRLQNALRAHKVMKKDVEYVVLNGKIELVDTFTGRIMEGRSYSEGLQQAIQAKELVEIDPETKTLATITYQNFFRLFKKLSGMTGTGKTEEQEFIDIYNMRVTEIPTNVPIARIDHPEKVYVTFQAKYKAVVEEIKRLHAKKQPILVGTSQVEESEYLHQLLLKENLPHTVLNAKQNKNEADIIAKAGIAGAITIATNMAGRGTDIKPDAESLKQGGLFVLGTDKSEARRIDNQLKGRSGRQGDVGESRFFISIDDQLIRRFSLQDKWKEIFAEYKDNEIIDKQIKKAFDKAQRKIEGFNYDNRKNVLNYDDVIRQQRDIIYSQRDSILLQDDLSLVVEKMIQRNSKQIIKYGELYTRTGALDHKALVNFVNKEYMNICDFKFTLEDFNNYINEEIPQHLSNILIREYRKMREFLVEKSGKLPTNLFERRAIISALDEKWQNHINLMDKLRQSVNLVQYSQKNPFQTYTEIGTKHFEQLVEDIATNSLKIIMNNPSAKFQNLDGDFKNEQIKLEDGSIITIPANIPFDIKEQIISKAKELLKESGEKRKVFEKNILSDLNLVDEKFRDSSKW</sequence>
<organism>
    <name type="scientific">Mycoplasma mobile (strain ATCC 43663 / 163K / NCTC 11711)</name>
    <name type="common">Mesomycoplasma mobile</name>
    <dbReference type="NCBI Taxonomy" id="267748"/>
    <lineage>
        <taxon>Bacteria</taxon>
        <taxon>Bacillati</taxon>
        <taxon>Mycoplasmatota</taxon>
        <taxon>Mycoplasmoidales</taxon>
        <taxon>Metamycoplasmataceae</taxon>
        <taxon>Mesomycoplasma</taxon>
    </lineage>
</organism>
<evidence type="ECO:0000255" key="1">
    <source>
        <dbReference type="HAMAP-Rule" id="MF_01382"/>
    </source>
</evidence>
<dbReference type="EC" id="7.4.2.8" evidence="1"/>
<dbReference type="EMBL" id="AE017308">
    <property type="protein sequence ID" value="AAT27572.1"/>
    <property type="molecule type" value="Genomic_DNA"/>
</dbReference>
<dbReference type="RefSeq" id="WP_011264606.1">
    <property type="nucleotide sequence ID" value="NC_006908.1"/>
</dbReference>
<dbReference type="SMR" id="Q6KIK4"/>
<dbReference type="STRING" id="267748.MMOB0860"/>
<dbReference type="KEGG" id="mmo:MMOB0860"/>
<dbReference type="eggNOG" id="COG0653">
    <property type="taxonomic scope" value="Bacteria"/>
</dbReference>
<dbReference type="HOGENOM" id="CLU_005314_3_0_14"/>
<dbReference type="OrthoDB" id="9805579at2"/>
<dbReference type="Proteomes" id="UP000009072">
    <property type="component" value="Chromosome"/>
</dbReference>
<dbReference type="GO" id="GO:0031522">
    <property type="term" value="C:cell envelope Sec protein transport complex"/>
    <property type="evidence" value="ECO:0007669"/>
    <property type="project" value="TreeGrafter"/>
</dbReference>
<dbReference type="GO" id="GO:0005829">
    <property type="term" value="C:cytosol"/>
    <property type="evidence" value="ECO:0007669"/>
    <property type="project" value="TreeGrafter"/>
</dbReference>
<dbReference type="GO" id="GO:0005886">
    <property type="term" value="C:plasma membrane"/>
    <property type="evidence" value="ECO:0007669"/>
    <property type="project" value="UniProtKB-SubCell"/>
</dbReference>
<dbReference type="GO" id="GO:0005524">
    <property type="term" value="F:ATP binding"/>
    <property type="evidence" value="ECO:0007669"/>
    <property type="project" value="UniProtKB-UniRule"/>
</dbReference>
<dbReference type="GO" id="GO:0008564">
    <property type="term" value="F:protein-exporting ATPase activity"/>
    <property type="evidence" value="ECO:0007669"/>
    <property type="project" value="UniProtKB-EC"/>
</dbReference>
<dbReference type="GO" id="GO:0065002">
    <property type="term" value="P:intracellular protein transmembrane transport"/>
    <property type="evidence" value="ECO:0007669"/>
    <property type="project" value="UniProtKB-UniRule"/>
</dbReference>
<dbReference type="GO" id="GO:0017038">
    <property type="term" value="P:protein import"/>
    <property type="evidence" value="ECO:0007669"/>
    <property type="project" value="InterPro"/>
</dbReference>
<dbReference type="GO" id="GO:0006605">
    <property type="term" value="P:protein targeting"/>
    <property type="evidence" value="ECO:0007669"/>
    <property type="project" value="UniProtKB-UniRule"/>
</dbReference>
<dbReference type="GO" id="GO:0043952">
    <property type="term" value="P:protein transport by the Sec complex"/>
    <property type="evidence" value="ECO:0007669"/>
    <property type="project" value="TreeGrafter"/>
</dbReference>
<dbReference type="CDD" id="cd17928">
    <property type="entry name" value="DEXDc_SecA"/>
    <property type="match status" value="1"/>
</dbReference>
<dbReference type="CDD" id="cd18803">
    <property type="entry name" value="SF2_C_secA"/>
    <property type="match status" value="1"/>
</dbReference>
<dbReference type="FunFam" id="3.40.50.300:FF:000429">
    <property type="entry name" value="Preprotein translocase subunit SecA"/>
    <property type="match status" value="1"/>
</dbReference>
<dbReference type="Gene3D" id="1.10.3060.10">
    <property type="entry name" value="Helical scaffold and wing domains of SecA"/>
    <property type="match status" value="1"/>
</dbReference>
<dbReference type="Gene3D" id="3.40.50.300">
    <property type="entry name" value="P-loop containing nucleotide triphosphate hydrolases"/>
    <property type="match status" value="3"/>
</dbReference>
<dbReference type="Gene3D" id="3.90.1440.10">
    <property type="entry name" value="SecA, preprotein cross-linking domain"/>
    <property type="match status" value="1"/>
</dbReference>
<dbReference type="HAMAP" id="MF_01382">
    <property type="entry name" value="SecA"/>
    <property type="match status" value="1"/>
</dbReference>
<dbReference type="InterPro" id="IPR014001">
    <property type="entry name" value="Helicase_ATP-bd"/>
</dbReference>
<dbReference type="InterPro" id="IPR001650">
    <property type="entry name" value="Helicase_C-like"/>
</dbReference>
<dbReference type="InterPro" id="IPR027417">
    <property type="entry name" value="P-loop_NTPase"/>
</dbReference>
<dbReference type="InterPro" id="IPR000185">
    <property type="entry name" value="SecA"/>
</dbReference>
<dbReference type="InterPro" id="IPR011115">
    <property type="entry name" value="SecA_DEAD"/>
</dbReference>
<dbReference type="InterPro" id="IPR014018">
    <property type="entry name" value="SecA_motor_DEAD"/>
</dbReference>
<dbReference type="InterPro" id="IPR011130">
    <property type="entry name" value="SecA_preprotein_X-link_dom"/>
</dbReference>
<dbReference type="InterPro" id="IPR044722">
    <property type="entry name" value="SecA_SF2_C"/>
</dbReference>
<dbReference type="InterPro" id="IPR011116">
    <property type="entry name" value="SecA_Wing/Scaffold"/>
</dbReference>
<dbReference type="InterPro" id="IPR036266">
    <property type="entry name" value="SecA_Wing/Scaffold_sf"/>
</dbReference>
<dbReference type="InterPro" id="IPR036670">
    <property type="entry name" value="SecA_X-link_sf"/>
</dbReference>
<dbReference type="NCBIfam" id="NF006630">
    <property type="entry name" value="PRK09200.1"/>
    <property type="match status" value="1"/>
</dbReference>
<dbReference type="NCBIfam" id="TIGR00963">
    <property type="entry name" value="secA"/>
    <property type="match status" value="1"/>
</dbReference>
<dbReference type="PANTHER" id="PTHR30612:SF0">
    <property type="entry name" value="CHLOROPLAST PROTEIN-TRANSPORTING ATPASE"/>
    <property type="match status" value="1"/>
</dbReference>
<dbReference type="PANTHER" id="PTHR30612">
    <property type="entry name" value="SECA INNER MEMBRANE COMPONENT OF SEC PROTEIN SECRETION SYSTEM"/>
    <property type="match status" value="1"/>
</dbReference>
<dbReference type="Pfam" id="PF21090">
    <property type="entry name" value="P-loop_SecA"/>
    <property type="match status" value="2"/>
</dbReference>
<dbReference type="Pfam" id="PF07517">
    <property type="entry name" value="SecA_DEAD"/>
    <property type="match status" value="1"/>
</dbReference>
<dbReference type="Pfam" id="PF01043">
    <property type="entry name" value="SecA_PP_bind"/>
    <property type="match status" value="1"/>
</dbReference>
<dbReference type="Pfam" id="PF07516">
    <property type="entry name" value="SecA_SW"/>
    <property type="match status" value="1"/>
</dbReference>
<dbReference type="PRINTS" id="PR00906">
    <property type="entry name" value="SECA"/>
</dbReference>
<dbReference type="SMART" id="SM00957">
    <property type="entry name" value="SecA_DEAD"/>
    <property type="match status" value="1"/>
</dbReference>
<dbReference type="SMART" id="SM00958">
    <property type="entry name" value="SecA_PP_bind"/>
    <property type="match status" value="1"/>
</dbReference>
<dbReference type="SUPFAM" id="SSF81886">
    <property type="entry name" value="Helical scaffold and wing domains of SecA"/>
    <property type="match status" value="1"/>
</dbReference>
<dbReference type="SUPFAM" id="SSF52540">
    <property type="entry name" value="P-loop containing nucleoside triphosphate hydrolases"/>
    <property type="match status" value="2"/>
</dbReference>
<dbReference type="SUPFAM" id="SSF81767">
    <property type="entry name" value="Pre-protein crosslinking domain of SecA"/>
    <property type="match status" value="1"/>
</dbReference>
<dbReference type="PROSITE" id="PS51196">
    <property type="entry name" value="SECA_MOTOR_DEAD"/>
    <property type="match status" value="1"/>
</dbReference>
<comment type="function">
    <text evidence="1">Part of the Sec protein translocase complex. Interacts with the SecYEG preprotein conducting channel. Has a central role in coupling the hydrolysis of ATP to the transfer of proteins into and across the cell membrane, serving as an ATP-driven molecular motor driving the stepwise translocation of polypeptide chains across the membrane.</text>
</comment>
<comment type="catalytic activity">
    <reaction evidence="1">
        <text>ATP + H2O + cellular proteinSide 1 = ADP + phosphate + cellular proteinSide 2.</text>
        <dbReference type="EC" id="7.4.2.8"/>
    </reaction>
</comment>
<comment type="subunit">
    <text evidence="1">Monomer and homodimer. Part of the essential Sec protein translocation apparatus which comprises SecA, SecYEG and auxiliary proteins SecDF. Other proteins may also be involved.</text>
</comment>
<comment type="subcellular location">
    <subcellularLocation>
        <location evidence="1">Cell membrane</location>
        <topology evidence="1">Peripheral membrane protein</topology>
        <orientation evidence="1">Cytoplasmic side</orientation>
    </subcellularLocation>
    <subcellularLocation>
        <location evidence="1">Cytoplasm</location>
    </subcellularLocation>
    <text evidence="1">Distribution is 50-50.</text>
</comment>
<comment type="similarity">
    <text evidence="1">Belongs to the SecA family.</text>
</comment>
<keyword id="KW-0067">ATP-binding</keyword>
<keyword id="KW-1003">Cell membrane</keyword>
<keyword id="KW-0963">Cytoplasm</keyword>
<keyword id="KW-0472">Membrane</keyword>
<keyword id="KW-0547">Nucleotide-binding</keyword>
<keyword id="KW-0653">Protein transport</keyword>
<keyword id="KW-1185">Reference proteome</keyword>
<keyword id="KW-1278">Translocase</keyword>
<keyword id="KW-0811">Translocation</keyword>
<keyword id="KW-0813">Transport</keyword>
<proteinExistence type="inferred from homology"/>
<accession>Q6KIK4</accession>
<name>SECA_MYCM1</name>
<protein>
    <recommendedName>
        <fullName evidence="1">Protein translocase subunit SecA</fullName>
        <ecNumber evidence="1">7.4.2.8</ecNumber>
    </recommendedName>
</protein>
<feature type="chain" id="PRO_0000320857" description="Protein translocase subunit SecA">
    <location>
        <begin position="1"/>
        <end position="854"/>
    </location>
</feature>
<feature type="binding site" evidence="1">
    <location>
        <position position="81"/>
    </location>
    <ligand>
        <name>ATP</name>
        <dbReference type="ChEBI" id="CHEBI:30616"/>
    </ligand>
</feature>
<feature type="binding site" evidence="1">
    <location>
        <begin position="99"/>
        <end position="103"/>
    </location>
    <ligand>
        <name>ATP</name>
        <dbReference type="ChEBI" id="CHEBI:30616"/>
    </ligand>
</feature>
<feature type="binding site" evidence="1">
    <location>
        <position position="487"/>
    </location>
    <ligand>
        <name>ATP</name>
        <dbReference type="ChEBI" id="CHEBI:30616"/>
    </ligand>
</feature>
<gene>
    <name evidence="1" type="primary">secA</name>
    <name type="ordered locus">MMOB0860</name>
</gene>